<dbReference type="EC" id="2.1.1.192" evidence="1"/>
<dbReference type="EMBL" id="AM263198">
    <property type="protein sequence ID" value="CAK19868.1"/>
    <property type="molecule type" value="Genomic_DNA"/>
</dbReference>
<dbReference type="RefSeq" id="WP_011701299.1">
    <property type="nucleotide sequence ID" value="NC_008555.1"/>
</dbReference>
<dbReference type="SMR" id="A0AFT6"/>
<dbReference type="STRING" id="386043.lwe0450"/>
<dbReference type="GeneID" id="61188340"/>
<dbReference type="KEGG" id="lwe:lwe0450"/>
<dbReference type="eggNOG" id="COG0820">
    <property type="taxonomic scope" value="Bacteria"/>
</dbReference>
<dbReference type="HOGENOM" id="CLU_029101_0_1_9"/>
<dbReference type="OrthoDB" id="9793973at2"/>
<dbReference type="Proteomes" id="UP000000779">
    <property type="component" value="Chromosome"/>
</dbReference>
<dbReference type="GO" id="GO:0005737">
    <property type="term" value="C:cytoplasm"/>
    <property type="evidence" value="ECO:0007669"/>
    <property type="project" value="UniProtKB-SubCell"/>
</dbReference>
<dbReference type="GO" id="GO:0051539">
    <property type="term" value="F:4 iron, 4 sulfur cluster binding"/>
    <property type="evidence" value="ECO:0007669"/>
    <property type="project" value="UniProtKB-UniRule"/>
</dbReference>
<dbReference type="GO" id="GO:0046872">
    <property type="term" value="F:metal ion binding"/>
    <property type="evidence" value="ECO:0007669"/>
    <property type="project" value="UniProtKB-KW"/>
</dbReference>
<dbReference type="GO" id="GO:0070040">
    <property type="term" value="F:rRNA (adenine(2503)-C2-)-methyltransferase activity"/>
    <property type="evidence" value="ECO:0007669"/>
    <property type="project" value="UniProtKB-UniRule"/>
</dbReference>
<dbReference type="GO" id="GO:0019843">
    <property type="term" value="F:rRNA binding"/>
    <property type="evidence" value="ECO:0007669"/>
    <property type="project" value="UniProtKB-UniRule"/>
</dbReference>
<dbReference type="GO" id="GO:0002935">
    <property type="term" value="F:tRNA (adenine(37)-C2)-methyltransferase activity"/>
    <property type="evidence" value="ECO:0007669"/>
    <property type="project" value="UniProtKB-UniRule"/>
</dbReference>
<dbReference type="GO" id="GO:0000049">
    <property type="term" value="F:tRNA binding"/>
    <property type="evidence" value="ECO:0007669"/>
    <property type="project" value="UniProtKB-UniRule"/>
</dbReference>
<dbReference type="GO" id="GO:0070475">
    <property type="term" value="P:rRNA base methylation"/>
    <property type="evidence" value="ECO:0007669"/>
    <property type="project" value="UniProtKB-UniRule"/>
</dbReference>
<dbReference type="GO" id="GO:0030488">
    <property type="term" value="P:tRNA methylation"/>
    <property type="evidence" value="ECO:0007669"/>
    <property type="project" value="UniProtKB-UniRule"/>
</dbReference>
<dbReference type="CDD" id="cd01335">
    <property type="entry name" value="Radical_SAM"/>
    <property type="match status" value="1"/>
</dbReference>
<dbReference type="FunFam" id="3.20.20.70:FF:000014">
    <property type="entry name" value="Probable dual-specificity RNA methyltransferase RlmN"/>
    <property type="match status" value="1"/>
</dbReference>
<dbReference type="Gene3D" id="1.10.150.530">
    <property type="match status" value="1"/>
</dbReference>
<dbReference type="Gene3D" id="3.20.20.70">
    <property type="entry name" value="Aldolase class I"/>
    <property type="match status" value="1"/>
</dbReference>
<dbReference type="HAMAP" id="MF_01849">
    <property type="entry name" value="RNA_methyltr_RlmN"/>
    <property type="match status" value="1"/>
</dbReference>
<dbReference type="InterPro" id="IPR013785">
    <property type="entry name" value="Aldolase_TIM"/>
</dbReference>
<dbReference type="InterPro" id="IPR040072">
    <property type="entry name" value="Methyltransferase_A"/>
</dbReference>
<dbReference type="InterPro" id="IPR048641">
    <property type="entry name" value="RlmN_N"/>
</dbReference>
<dbReference type="InterPro" id="IPR027492">
    <property type="entry name" value="RNA_MTrfase_RlmN"/>
</dbReference>
<dbReference type="InterPro" id="IPR004383">
    <property type="entry name" value="rRNA_lsu_MTrfase_RlmN/Cfr"/>
</dbReference>
<dbReference type="InterPro" id="IPR007197">
    <property type="entry name" value="rSAM"/>
</dbReference>
<dbReference type="NCBIfam" id="TIGR00048">
    <property type="entry name" value="rRNA_mod_RlmN"/>
    <property type="match status" value="1"/>
</dbReference>
<dbReference type="PANTHER" id="PTHR30544">
    <property type="entry name" value="23S RRNA METHYLTRANSFERASE"/>
    <property type="match status" value="1"/>
</dbReference>
<dbReference type="PANTHER" id="PTHR30544:SF5">
    <property type="entry name" value="RADICAL SAM CORE DOMAIN-CONTAINING PROTEIN"/>
    <property type="match status" value="1"/>
</dbReference>
<dbReference type="Pfam" id="PF04055">
    <property type="entry name" value="Radical_SAM"/>
    <property type="match status" value="1"/>
</dbReference>
<dbReference type="Pfam" id="PF21016">
    <property type="entry name" value="RlmN_N"/>
    <property type="match status" value="1"/>
</dbReference>
<dbReference type="PIRSF" id="PIRSF006004">
    <property type="entry name" value="CHP00048"/>
    <property type="match status" value="1"/>
</dbReference>
<dbReference type="SFLD" id="SFLDF00275">
    <property type="entry name" value="adenosine_C2_methyltransferase"/>
    <property type="match status" value="1"/>
</dbReference>
<dbReference type="SFLD" id="SFLDG01062">
    <property type="entry name" value="methyltransferase_(Class_A)"/>
    <property type="match status" value="1"/>
</dbReference>
<dbReference type="SUPFAM" id="SSF102114">
    <property type="entry name" value="Radical SAM enzymes"/>
    <property type="match status" value="1"/>
</dbReference>
<dbReference type="PROSITE" id="PS51918">
    <property type="entry name" value="RADICAL_SAM"/>
    <property type="match status" value="1"/>
</dbReference>
<keyword id="KW-0004">4Fe-4S</keyword>
<keyword id="KW-0963">Cytoplasm</keyword>
<keyword id="KW-1015">Disulfide bond</keyword>
<keyword id="KW-0408">Iron</keyword>
<keyword id="KW-0411">Iron-sulfur</keyword>
<keyword id="KW-0479">Metal-binding</keyword>
<keyword id="KW-0489">Methyltransferase</keyword>
<keyword id="KW-0698">rRNA processing</keyword>
<keyword id="KW-0949">S-adenosyl-L-methionine</keyword>
<keyword id="KW-0808">Transferase</keyword>
<keyword id="KW-0819">tRNA processing</keyword>
<gene>
    <name evidence="1" type="primary">rlmN</name>
    <name type="ordered locus">lwe0450</name>
</gene>
<name>RLMN_LISW6</name>
<protein>
    <recommendedName>
        <fullName evidence="1">Probable dual-specificity RNA methyltransferase RlmN</fullName>
        <ecNumber evidence="1">2.1.1.192</ecNumber>
    </recommendedName>
    <alternativeName>
        <fullName evidence="1">23S rRNA (adenine(2503)-C(2))-methyltransferase</fullName>
    </alternativeName>
    <alternativeName>
        <fullName evidence="1">23S rRNA m2A2503 methyltransferase</fullName>
    </alternativeName>
    <alternativeName>
        <fullName evidence="1">Ribosomal RNA large subunit methyltransferase N</fullName>
    </alternativeName>
    <alternativeName>
        <fullName evidence="1">tRNA (adenine(37)-C(2))-methyltransferase</fullName>
    </alternativeName>
    <alternativeName>
        <fullName evidence="1">tRNA m2A37 methyltransferase</fullName>
    </alternativeName>
</protein>
<organism>
    <name type="scientific">Listeria welshimeri serovar 6b (strain ATCC 35897 / DSM 20650 / CCUG 15529 / CIP 8149 / NCTC 11857 / SLCC 5334 / V8)</name>
    <dbReference type="NCBI Taxonomy" id="386043"/>
    <lineage>
        <taxon>Bacteria</taxon>
        <taxon>Bacillati</taxon>
        <taxon>Bacillota</taxon>
        <taxon>Bacilli</taxon>
        <taxon>Bacillales</taxon>
        <taxon>Listeriaceae</taxon>
        <taxon>Listeria</taxon>
    </lineage>
</organism>
<reference key="1">
    <citation type="journal article" date="2006" name="J. Bacteriol.">
        <title>Whole-genome sequence of Listeria welshimeri reveals common steps in genome reduction with Listeria innocua as compared to Listeria monocytogenes.</title>
        <authorList>
            <person name="Hain T."/>
            <person name="Steinweg C."/>
            <person name="Kuenne C.T."/>
            <person name="Billion A."/>
            <person name="Ghai R."/>
            <person name="Chatterjee S.S."/>
            <person name="Domann E."/>
            <person name="Kaerst U."/>
            <person name="Goesmann A."/>
            <person name="Bekel T."/>
            <person name="Bartels D."/>
            <person name="Kaiser O."/>
            <person name="Meyer F."/>
            <person name="Puehler A."/>
            <person name="Weisshaar B."/>
            <person name="Wehland J."/>
            <person name="Liang C."/>
            <person name="Dandekar T."/>
            <person name="Lampidis R."/>
            <person name="Kreft J."/>
            <person name="Goebel W."/>
            <person name="Chakraborty T."/>
        </authorList>
    </citation>
    <scope>NUCLEOTIDE SEQUENCE [LARGE SCALE GENOMIC DNA]</scope>
    <source>
        <strain>ATCC 35897 / DSM 20650 / CCUG 15529 / CIP 8149 / NCTC 11857 / SLCC 5334 / V8</strain>
    </source>
</reference>
<accession>A0AFT6</accession>
<feature type="chain" id="PRO_0000350241" description="Probable dual-specificity RNA methyltransferase RlmN">
    <location>
        <begin position="1"/>
        <end position="367"/>
    </location>
</feature>
<feature type="domain" description="Radical SAM core" evidence="2">
    <location>
        <begin position="98"/>
        <end position="326"/>
    </location>
</feature>
<feature type="active site" description="Proton acceptor" evidence="1">
    <location>
        <position position="92"/>
    </location>
</feature>
<feature type="active site" description="S-methylcysteine intermediate" evidence="1">
    <location>
        <position position="341"/>
    </location>
</feature>
<feature type="binding site" evidence="1">
    <location>
        <position position="112"/>
    </location>
    <ligand>
        <name>[4Fe-4S] cluster</name>
        <dbReference type="ChEBI" id="CHEBI:49883"/>
        <note>4Fe-4S-S-AdoMet</note>
    </ligand>
</feature>
<feature type="binding site" evidence="1">
    <location>
        <position position="116"/>
    </location>
    <ligand>
        <name>[4Fe-4S] cluster</name>
        <dbReference type="ChEBI" id="CHEBI:49883"/>
        <note>4Fe-4S-S-AdoMet</note>
    </ligand>
</feature>
<feature type="binding site" evidence="1">
    <location>
        <position position="119"/>
    </location>
    <ligand>
        <name>[4Fe-4S] cluster</name>
        <dbReference type="ChEBI" id="CHEBI:49883"/>
        <note>4Fe-4S-S-AdoMet</note>
    </ligand>
</feature>
<feature type="binding site" evidence="1">
    <location>
        <begin position="164"/>
        <end position="165"/>
    </location>
    <ligand>
        <name>S-adenosyl-L-methionine</name>
        <dbReference type="ChEBI" id="CHEBI:59789"/>
    </ligand>
</feature>
<feature type="binding site" evidence="1">
    <location>
        <position position="196"/>
    </location>
    <ligand>
        <name>S-adenosyl-L-methionine</name>
        <dbReference type="ChEBI" id="CHEBI:59789"/>
    </ligand>
</feature>
<feature type="binding site" evidence="1">
    <location>
        <begin position="219"/>
        <end position="221"/>
    </location>
    <ligand>
        <name>S-adenosyl-L-methionine</name>
        <dbReference type="ChEBI" id="CHEBI:59789"/>
    </ligand>
</feature>
<feature type="binding site" evidence="1">
    <location>
        <position position="297"/>
    </location>
    <ligand>
        <name>S-adenosyl-L-methionine</name>
        <dbReference type="ChEBI" id="CHEBI:59789"/>
    </ligand>
</feature>
<feature type="disulfide bond" description="(transient)" evidence="1">
    <location>
        <begin position="105"/>
        <end position="341"/>
    </location>
</feature>
<evidence type="ECO:0000255" key="1">
    <source>
        <dbReference type="HAMAP-Rule" id="MF_01849"/>
    </source>
</evidence>
<evidence type="ECO:0000255" key="2">
    <source>
        <dbReference type="PROSITE-ProRule" id="PRU01266"/>
    </source>
</evidence>
<proteinExistence type="inferred from homology"/>
<comment type="function">
    <text evidence="1">Specifically methylates position 2 of adenine 2503 in 23S rRNA and position 2 of adenine 37 in tRNAs.</text>
</comment>
<comment type="catalytic activity">
    <reaction evidence="1">
        <text>adenosine(2503) in 23S rRNA + 2 reduced [2Fe-2S]-[ferredoxin] + 2 S-adenosyl-L-methionine = 2-methyladenosine(2503) in 23S rRNA + 5'-deoxyadenosine + L-methionine + 2 oxidized [2Fe-2S]-[ferredoxin] + S-adenosyl-L-homocysteine</text>
        <dbReference type="Rhea" id="RHEA:42916"/>
        <dbReference type="Rhea" id="RHEA-COMP:10000"/>
        <dbReference type="Rhea" id="RHEA-COMP:10001"/>
        <dbReference type="Rhea" id="RHEA-COMP:10152"/>
        <dbReference type="Rhea" id="RHEA-COMP:10282"/>
        <dbReference type="ChEBI" id="CHEBI:17319"/>
        <dbReference type="ChEBI" id="CHEBI:33737"/>
        <dbReference type="ChEBI" id="CHEBI:33738"/>
        <dbReference type="ChEBI" id="CHEBI:57844"/>
        <dbReference type="ChEBI" id="CHEBI:57856"/>
        <dbReference type="ChEBI" id="CHEBI:59789"/>
        <dbReference type="ChEBI" id="CHEBI:74411"/>
        <dbReference type="ChEBI" id="CHEBI:74497"/>
        <dbReference type="EC" id="2.1.1.192"/>
    </reaction>
</comment>
<comment type="catalytic activity">
    <reaction evidence="1">
        <text>adenosine(37) in tRNA + 2 reduced [2Fe-2S]-[ferredoxin] + 2 S-adenosyl-L-methionine = 2-methyladenosine(37) in tRNA + 5'-deoxyadenosine + L-methionine + 2 oxidized [2Fe-2S]-[ferredoxin] + S-adenosyl-L-homocysteine</text>
        <dbReference type="Rhea" id="RHEA:43332"/>
        <dbReference type="Rhea" id="RHEA-COMP:10000"/>
        <dbReference type="Rhea" id="RHEA-COMP:10001"/>
        <dbReference type="Rhea" id="RHEA-COMP:10162"/>
        <dbReference type="Rhea" id="RHEA-COMP:10485"/>
        <dbReference type="ChEBI" id="CHEBI:17319"/>
        <dbReference type="ChEBI" id="CHEBI:33737"/>
        <dbReference type="ChEBI" id="CHEBI:33738"/>
        <dbReference type="ChEBI" id="CHEBI:57844"/>
        <dbReference type="ChEBI" id="CHEBI:57856"/>
        <dbReference type="ChEBI" id="CHEBI:59789"/>
        <dbReference type="ChEBI" id="CHEBI:74411"/>
        <dbReference type="ChEBI" id="CHEBI:74497"/>
        <dbReference type="EC" id="2.1.1.192"/>
    </reaction>
</comment>
<comment type="cofactor">
    <cofactor evidence="1">
        <name>[4Fe-4S] cluster</name>
        <dbReference type="ChEBI" id="CHEBI:49883"/>
    </cofactor>
    <text evidence="1">Binds 1 [4Fe-4S] cluster. The cluster is coordinated with 3 cysteines and an exchangeable S-adenosyl-L-methionine.</text>
</comment>
<comment type="subcellular location">
    <subcellularLocation>
        <location evidence="1">Cytoplasm</location>
    </subcellularLocation>
</comment>
<comment type="miscellaneous">
    <text evidence="1">Reaction proceeds by a ping-pong mechanism involving intermediate methylation of a conserved cysteine residue.</text>
</comment>
<comment type="similarity">
    <text evidence="1">Belongs to the radical SAM superfamily. RlmN family.</text>
</comment>
<sequence>MEKSSIYGLTWTKLTEWLEAHGQKKFRATQVWDWLYRKRVKTFEEMSNVPKETIELLTANFVMNTLEEQVVQESTDGTTKYLFKLSDGNLIETVMMKQEYGLSVCVTTQVGCNIGCTFCASGLLKKSRDLTAGEIVEQIMNVQHYLDGRNLEERVSHVVVMGIGEPFDNYDNVMDFLRVINHDKGLAIGARHITVSTSGLAPRIIDFANEDFQVNLAISLHAPNNELRTSIMRINKTYSIEKLMEAIHYYVNKTNRRITFEYIMLKGVNDHKKEALELAALLGEHRHLAYVNLIPYNPVDEHIDYERSTKEDVLAFYDTLKKNGINCVIRREHGTDIDAACGQLRSKQIKRVGVRERMKQKQAALEE</sequence>